<proteinExistence type="evidence at protein level"/>
<sequence>MLKDEVIKQISTPLTSPAFPRGPYKFHNREYFNIVYRTDMDALRKVVPEPLEIDEPLVRFEIMAMHDTSGLGCYTESGQAIPVSFNGVKGDYLHMMYLDNEPAIAVGRELSAYPKKLGYPKLFVDSDTLVGTLDYGKLRVATATMGYKHKALDANEAKDQICRPNYMLKIIPNYDGSPRICELINAKITDVTVHEAWTGPTRLQLFDHAMAPLNDLPVKEIVSSSHILADIILPRAEVIYDYLK</sequence>
<organism>
    <name type="scientific">Clostridium acetobutylicum (strain ATCC 824 / DSM 792 / JCM 1419 / IAM 19013 / LMG 5710 / NBRC 13948 / NRRL B-527 / VKM B-1787 / 2291 / W)</name>
    <dbReference type="NCBI Taxonomy" id="272562"/>
    <lineage>
        <taxon>Bacteria</taxon>
        <taxon>Bacillati</taxon>
        <taxon>Bacillota</taxon>
        <taxon>Clostridia</taxon>
        <taxon>Eubacteriales</taxon>
        <taxon>Clostridiaceae</taxon>
        <taxon>Clostridium</taxon>
    </lineage>
</organism>
<feature type="chain" id="PRO_0000207101" description="Acetoacetate decarboxylase">
    <location>
        <begin position="1"/>
        <end position="244"/>
    </location>
</feature>
<feature type="active site" description="Schiff-base intermediate with acetoacetate" evidence="1 2 4 5">
    <location>
        <position position="115"/>
    </location>
</feature>
<feature type="site" description="Important for activity" evidence="11">
    <location>
        <position position="116"/>
    </location>
</feature>
<feature type="mutagenesis site" description="Complete loss of activity." evidence="5">
    <original>K</original>
    <variation>C</variation>
    <variation>Q</variation>
    <location>
        <position position="115"/>
    </location>
</feature>
<feature type="mutagenesis site" description="Retains 2% of wild type activity." evidence="5">
    <original>K</original>
    <variation>C</variation>
    <variation>N</variation>
    <location>
        <position position="116"/>
    </location>
</feature>
<feature type="mutagenesis site" description="Retains 20% of wild type activity." evidence="5">
    <original>K</original>
    <variation>R</variation>
    <location>
        <position position="116"/>
    </location>
</feature>
<feature type="sequence conflict" description="In Ref. 2; AAB53232." evidence="10" ref="2">
    <original>F</original>
    <variation>C</variation>
    <location>
        <position position="85"/>
    </location>
</feature>
<feature type="helix" evidence="14">
    <location>
        <begin position="3"/>
        <end position="7"/>
    </location>
</feature>
<feature type="strand" evidence="14">
    <location>
        <begin position="11"/>
        <end position="13"/>
    </location>
</feature>
<feature type="strand" evidence="14">
    <location>
        <begin position="25"/>
        <end position="37"/>
    </location>
</feature>
<feature type="helix" evidence="14">
    <location>
        <begin position="40"/>
        <end position="46"/>
    </location>
</feature>
<feature type="strand" evidence="14">
    <location>
        <begin position="57"/>
        <end position="68"/>
    </location>
</feature>
<feature type="turn" evidence="14">
    <location>
        <begin position="69"/>
        <end position="71"/>
    </location>
</feature>
<feature type="strand" evidence="14">
    <location>
        <begin position="72"/>
        <end position="85"/>
    </location>
</feature>
<feature type="strand" evidence="14">
    <location>
        <begin position="88"/>
        <end position="99"/>
    </location>
</feature>
<feature type="helix" evidence="14">
    <location>
        <begin position="101"/>
        <end position="109"/>
    </location>
</feature>
<feature type="strand" evidence="14">
    <location>
        <begin position="115"/>
        <end position="117"/>
    </location>
</feature>
<feature type="strand" evidence="14">
    <location>
        <begin position="119"/>
        <end position="125"/>
    </location>
</feature>
<feature type="strand" evidence="14">
    <location>
        <begin position="128"/>
        <end position="135"/>
    </location>
</feature>
<feature type="strand" evidence="14">
    <location>
        <begin position="138"/>
        <end position="146"/>
    </location>
</feature>
<feature type="helix" evidence="14">
    <location>
        <begin position="154"/>
        <end position="161"/>
    </location>
</feature>
<feature type="strand" evidence="14">
    <location>
        <begin position="165"/>
        <end position="172"/>
    </location>
</feature>
<feature type="strand" evidence="14">
    <location>
        <begin position="176"/>
        <end position="186"/>
    </location>
</feature>
<feature type="strand" evidence="14">
    <location>
        <begin position="190"/>
        <end position="198"/>
    </location>
</feature>
<feature type="strand" evidence="14">
    <location>
        <begin position="201"/>
        <end position="205"/>
    </location>
</feature>
<feature type="helix" evidence="14">
    <location>
        <begin position="213"/>
        <end position="215"/>
    </location>
</feature>
<feature type="strand" evidence="14">
    <location>
        <begin position="219"/>
        <end position="232"/>
    </location>
</feature>
<feature type="strand" evidence="14">
    <location>
        <begin position="236"/>
        <end position="241"/>
    </location>
</feature>
<geneLocation type="plasmid">
    <name>pSOL1</name>
</geneLocation>
<gene>
    <name evidence="1 7" type="primary">adc</name>
    <name type="ordered locus">CA_P0165</name>
</gene>
<accession>P23670</accession>
<accession>Q9S428</accession>
<reference key="1">
    <citation type="journal article" date="1990" name="J. Bacteriol.">
        <title>Cloning, sequencing, and molecular analysis of the acetoacetate decarboxylase gene region from Clostridium acetobutylicum.</title>
        <authorList>
            <person name="Gerischer U."/>
            <person name="Duerre P."/>
        </authorList>
    </citation>
    <scope>NUCLEOTIDE SEQUENCE [GENOMIC DNA]</scope>
    <scope>PROTEIN SEQUENCE OF 1-25</scope>
    <source>
        <strain>ATCC 824 / DSM 792 / JCM 1419 / IAM 19013 / LMG 5710 / NBRC 13948 / NRRL B-527 / VKM B-1787 / 2291 / W</strain>
    </source>
</reference>
<reference key="2">
    <citation type="journal article" date="1993" name="Gene">
        <title>Sequence and arrangement of genes encoding enzymes of the acetone-production pathway of Clostridium acetobutylicum ATCC824.</title>
        <authorList>
            <person name="Petersen D.J."/>
            <person name="Cary J.W."/>
            <person name="Vanderleyden J."/>
            <person name="Bennett G.N."/>
        </authorList>
    </citation>
    <scope>NUCLEOTIDE SEQUENCE [GENOMIC DNA]</scope>
    <scope>PROTEIN SEQUENCE OF 1-30</scope>
    <source>
        <strain>ATCC 824 / DSM 792 / JCM 1419 / IAM 19013 / LMG 5710 / NBRC 13948 / NRRL B-527 / VKM B-1787 / 2291 / W</strain>
    </source>
</reference>
<reference key="3">
    <citation type="journal article" date="2001" name="J. Bacteriol.">
        <title>Genome sequence and comparative analysis of the solvent-producing bacterium Clostridium acetobutylicum.</title>
        <authorList>
            <person name="Noelling J."/>
            <person name="Breton G."/>
            <person name="Omelchenko M.V."/>
            <person name="Makarova K.S."/>
            <person name="Zeng Q."/>
            <person name="Gibson R."/>
            <person name="Lee H.M."/>
            <person name="Dubois J."/>
            <person name="Qiu D."/>
            <person name="Hitti J."/>
            <person name="Wolf Y.I."/>
            <person name="Tatusov R.L."/>
            <person name="Sabathe F."/>
            <person name="Doucette-Stamm L.A."/>
            <person name="Soucaille P."/>
            <person name="Daly M.J."/>
            <person name="Bennett G.N."/>
            <person name="Koonin E.V."/>
            <person name="Smith D.R."/>
        </authorList>
    </citation>
    <scope>NUCLEOTIDE SEQUENCE [LARGE SCALE GENOMIC DNA]</scope>
    <source>
        <strain>ATCC 824 / DSM 792 / JCM 1419 / IAM 19013 / LMG 5710 / NBRC 13948 / NRRL B-527 / VKM B-1787 / 2291 / W</strain>
    </source>
</reference>
<reference key="4">
    <citation type="journal article" date="1993" name="J. Bacteriol.">
        <title>Cloning, sequencing, and molecular analysis of the sol operon of Clostridium acetobutylicum, a chromosomal locus involved in solventogenesis.</title>
        <authorList>
            <person name="Fischer R.J."/>
            <person name="Helms J."/>
            <person name="Duerre P."/>
        </authorList>
    </citation>
    <scope>NUCLEOTIDE SEQUENCE [GENOMIC DNA] OF 207-244</scope>
    <source>
        <strain>ATCC 824 / DSM 792 / JCM 1419 / IAM 19013 / LMG 5710 / NBRC 13948 / NRRL B-527 / VKM B-1787 / 2291 / W</strain>
    </source>
</reference>
<reference key="5">
    <citation type="submission" date="1999-06" db="EMBL/GenBank/DDBJ databases">
        <title>Molecular characterization of amyP, a pSOL1 located gene coding the major alpha-amylase of Clostridium acetobutylicum ATCC824, and its use as a reporter system for strain degeneration.</title>
        <authorList>
            <person name="Sabathe F."/>
            <person name="Cornillot E."/>
            <person name="Croux C."/>
            <person name="Soucaille P."/>
        </authorList>
    </citation>
    <scope>NUCLEOTIDE SEQUENCE [GENOMIC DNA] OF 1-29</scope>
    <source>
        <strain>ATCC 824 / DSM 792 / JCM 1419 / IAM 19013 / LMG 5710 / NBRC 13948 / NRRL B-527 / VKM B-1787 / 2291 / W</strain>
    </source>
</reference>
<reference key="6">
    <citation type="journal article" date="1990" name="Appl. Environ. Microbiol.">
        <title>Purification of acetoacetate decarboxylase from Clostridium acetobutylicum ATCC 824 and cloning of the acetoacetate decarboxylase gene in Escherichia coli.</title>
        <authorList>
            <person name="Petersen D.J."/>
            <person name="Bennett G.N."/>
        </authorList>
    </citation>
    <scope>PROTEIN SEQUENCE OF 1-20</scope>
    <scope>FUNCTION</scope>
    <scope>CATALYTIC ACTIVITY</scope>
    <source>
        <strain>ATCC 824 / DSM 792 / JCM 1419 / IAM 19013 / LMG 5710 / NBRC 13948 / NRRL B-527 / VKM B-1787 / 2291 / W</strain>
    </source>
</reference>
<reference key="7">
    <citation type="journal article" date="1966" name="J. Am. Chem. Soc.">
        <title>The active site of acetoacetate decarboxylase.</title>
        <authorList>
            <person name="Laursen R.A."/>
            <person name="Westheimer F.H."/>
        </authorList>
    </citation>
    <scope>ACTIVE SITE</scope>
</reference>
<reference key="8">
    <citation type="journal article" date="1996" name="Biochemistry">
        <title>Mechanism of the reaction catalyzed by acetoacetate decarboxylase. Importance of lysine 116 in determining the pKa of active-site lysine 115.</title>
        <authorList>
            <person name="Highbarger L.A."/>
            <person name="Gerlt J.A."/>
            <person name="Kenyon G.L."/>
        </authorList>
    </citation>
    <scope>FUNCTION</scope>
    <scope>CATALYTIC ACTIVITY</scope>
    <scope>REACTION MECHANISM</scope>
    <scope>BIOPHYSICOCHEMICAL PROPERTIES</scope>
    <scope>ACTIVE SITE</scope>
    <scope>MUTAGENESIS OF LYS-115 AND LYS-116</scope>
</reference>
<reference evidence="13" key="9">
    <citation type="journal article" date="2009" name="Nature">
        <title>The origin of the electrostatic perturbation in acetoacetate decarboxylase.</title>
        <authorList>
            <person name="Ho M.C."/>
            <person name="Menetret J.F."/>
            <person name="Tsuruta H."/>
            <person name="Allen K.N."/>
        </authorList>
    </citation>
    <scope>X-RAY CRYSTALLOGRAPHY (2.40 ANGSTROMS)</scope>
    <scope>FUNCTION</scope>
    <scope>CATALYTIC ACTIVITY</scope>
    <scope>REACTION MECHANISM</scope>
    <scope>BIOPHYSICOCHEMICAL PROPERTIES</scope>
    <scope>SUBUNIT</scope>
    <scope>DOMAIN</scope>
    <scope>ACTIVE SITE</scope>
</reference>
<protein>
    <recommendedName>
        <fullName evidence="1 8">Acetoacetate decarboxylase</fullName>
        <shortName evidence="1 9">AAD</shortName>
        <shortName evidence="6">AADase</shortName>
        <shortName evidence="1 7">ADC</shortName>
        <ecNumber evidence="1 2 3 5">4.1.1.4</ecNumber>
    </recommendedName>
</protein>
<name>ADC_CLOAB</name>
<evidence type="ECO:0000255" key="1">
    <source>
        <dbReference type="HAMAP-Rule" id="MF_00597"/>
    </source>
</evidence>
<evidence type="ECO:0000269" key="2">
    <source>
    </source>
</evidence>
<evidence type="ECO:0000269" key="3">
    <source>
    </source>
</evidence>
<evidence type="ECO:0000269" key="4">
    <source>
    </source>
</evidence>
<evidence type="ECO:0000269" key="5">
    <source>
    </source>
</evidence>
<evidence type="ECO:0000303" key="6">
    <source>
    </source>
</evidence>
<evidence type="ECO:0000303" key="7">
    <source>
    </source>
</evidence>
<evidence type="ECO:0000303" key="8">
    <source>
    </source>
</evidence>
<evidence type="ECO:0000303" key="9">
    <source>
    </source>
</evidence>
<evidence type="ECO:0000305" key="10"/>
<evidence type="ECO:0000305" key="11">
    <source>
    </source>
</evidence>
<evidence type="ECO:0000305" key="12">
    <source>
    </source>
</evidence>
<evidence type="ECO:0007744" key="13">
    <source>
        <dbReference type="PDB" id="3BH2"/>
    </source>
</evidence>
<evidence type="ECO:0007829" key="14">
    <source>
        <dbReference type="PDB" id="3BH2"/>
    </source>
</evidence>
<comment type="function">
    <text evidence="1 2 3 5">Catalyzes the conversion of acetoacetate to acetone and carbon dioxide.</text>
</comment>
<comment type="catalytic activity">
    <reaction evidence="1 2 3 5">
        <text>acetoacetate + H(+) = acetone + CO2</text>
        <dbReference type="Rhea" id="RHEA:19729"/>
        <dbReference type="ChEBI" id="CHEBI:13705"/>
        <dbReference type="ChEBI" id="CHEBI:15347"/>
        <dbReference type="ChEBI" id="CHEBI:15378"/>
        <dbReference type="ChEBI" id="CHEBI:16526"/>
        <dbReference type="EC" id="4.1.1.4"/>
    </reaction>
</comment>
<comment type="biophysicochemical properties">
    <kinetics>
        <KM evidence="5">8.2 mM for acetoacetate (at pH 5.95)</KM>
        <KM evidence="2">4.1 mM for acetoacetate (at pH 5.95)</KM>
        <text evidence="2 5">kcat is 1560 sec(-1) (PubMed:8555196). kcat is 165 sec(-1) (PubMed:19458715).</text>
    </kinetics>
    <phDependence>
        <text evidence="5">Optimum pH is 5.95.</text>
    </phDependence>
</comment>
<comment type="subunit">
    <text evidence="2">Homododecamer.</text>
</comment>
<comment type="interaction">
    <interactant intactId="EBI-15782069">
        <id>P23670</id>
    </interactant>
    <interactant intactId="EBI-15782069">
        <id>P23670</id>
        <label>adc</label>
    </interactant>
    <organismsDiffer>false</organismsDiffer>
    <experiments>4</experiments>
</comment>
<comment type="induction">
    <text evidence="12">By linear fatty acids (up to butyrate).</text>
</comment>
<comment type="domain">
    <text evidence="2">Lys-116 may be involved in the precise positioning of the nucleophilic Lys-115.</text>
</comment>
<comment type="similarity">
    <text evidence="1 10">Belongs to the ADC family.</text>
</comment>
<dbReference type="EC" id="4.1.1.4" evidence="1 2 3 5"/>
<dbReference type="EMBL" id="M55392">
    <property type="protein sequence ID" value="AAA63761.1"/>
    <property type="molecule type" value="Genomic_DNA"/>
</dbReference>
<dbReference type="EMBL" id="M93363">
    <property type="protein sequence ID" value="AAB53232.1"/>
    <property type="molecule type" value="Genomic_DNA"/>
</dbReference>
<dbReference type="EMBL" id="AE001438">
    <property type="protein sequence ID" value="AAK76910.1"/>
    <property type="molecule type" value="Genomic_DNA"/>
</dbReference>
<dbReference type="EMBL" id="X72831">
    <property type="protein sequence ID" value="CAA51347.1"/>
    <property type="molecule type" value="Genomic_DNA"/>
</dbReference>
<dbReference type="EMBL" id="AF164199">
    <property type="protein sequence ID" value="AAD47074.1"/>
    <property type="molecule type" value="Genomic_DNA"/>
</dbReference>
<dbReference type="PIR" id="JN0487">
    <property type="entry name" value="JN0487"/>
</dbReference>
<dbReference type="RefSeq" id="NP_149328.1">
    <property type="nucleotide sequence ID" value="NC_001988.2"/>
</dbReference>
<dbReference type="RefSeq" id="WP_010890849.1">
    <property type="nucleotide sequence ID" value="NC_001988.2"/>
</dbReference>
<dbReference type="PDB" id="3BH2">
    <property type="method" value="X-ray"/>
    <property type="resolution" value="2.40 A"/>
    <property type="chains" value="A/B/C/D=1-244"/>
</dbReference>
<dbReference type="PDBsum" id="3BH2"/>
<dbReference type="SMR" id="P23670"/>
<dbReference type="DIP" id="DIP-59756N"/>
<dbReference type="KEGG" id="cac:CA_P0165"/>
<dbReference type="PATRIC" id="fig|272562.8.peg.166"/>
<dbReference type="HOGENOM" id="CLU_077089_0_0_9"/>
<dbReference type="OrthoDB" id="1633687at2"/>
<dbReference type="BioCyc" id="MetaCyc:ADCCLOS-MONOMER"/>
<dbReference type="BRENDA" id="4.1.1.4">
    <property type="organism ID" value="1452"/>
</dbReference>
<dbReference type="EvolutionaryTrace" id="P23670"/>
<dbReference type="Proteomes" id="UP000000814">
    <property type="component" value="Plasmid pSOL1"/>
</dbReference>
<dbReference type="GO" id="GO:0047602">
    <property type="term" value="F:acetoacetate decarboxylase activity"/>
    <property type="evidence" value="ECO:0007669"/>
    <property type="project" value="UniProtKB-UniRule"/>
</dbReference>
<dbReference type="GO" id="GO:0042802">
    <property type="term" value="F:identical protein binding"/>
    <property type="evidence" value="ECO:0000353"/>
    <property type="project" value="IntAct"/>
</dbReference>
<dbReference type="FunFam" id="2.40.400.10:FF:000004">
    <property type="entry name" value="Acetoacetate decarboxylase"/>
    <property type="match status" value="1"/>
</dbReference>
<dbReference type="Gene3D" id="2.40.400.10">
    <property type="entry name" value="Acetoacetate decarboxylase-like"/>
    <property type="match status" value="1"/>
</dbReference>
<dbReference type="HAMAP" id="MF_00597">
    <property type="entry name" value="ADC"/>
    <property type="match status" value="1"/>
</dbReference>
<dbReference type="InterPro" id="IPR010451">
    <property type="entry name" value="Acetoacetate_decarboxylase"/>
</dbReference>
<dbReference type="InterPro" id="IPR023653">
    <property type="entry name" value="Acetoacetate_decarboxylase_bac"/>
</dbReference>
<dbReference type="InterPro" id="IPR023375">
    <property type="entry name" value="ADC_dom_sf"/>
</dbReference>
<dbReference type="NCBIfam" id="NF002614">
    <property type="entry name" value="PRK02265.1"/>
    <property type="match status" value="1"/>
</dbReference>
<dbReference type="Pfam" id="PF06314">
    <property type="entry name" value="ADC"/>
    <property type="match status" value="1"/>
</dbReference>
<dbReference type="SUPFAM" id="SSF160104">
    <property type="entry name" value="Acetoacetate decarboxylase-like"/>
    <property type="match status" value="1"/>
</dbReference>
<keyword id="KW-0002">3D-structure</keyword>
<keyword id="KW-0210">Decarboxylase</keyword>
<keyword id="KW-0903">Direct protein sequencing</keyword>
<keyword id="KW-0456">Lyase</keyword>
<keyword id="KW-0614">Plasmid</keyword>
<keyword id="KW-1185">Reference proteome</keyword>
<keyword id="KW-0704">Schiff base</keyword>